<comment type="function">
    <text evidence="1">IGPS catalyzes the conversion of PRFAR and glutamine to IGP, AICAR and glutamate. The HisF subunit catalyzes the cyclization activity that produces IGP and AICAR from PRFAR using the ammonia provided by the HisH subunit.</text>
</comment>
<comment type="catalytic activity">
    <reaction evidence="1">
        <text>5-[(5-phospho-1-deoxy-D-ribulos-1-ylimino)methylamino]-1-(5-phospho-beta-D-ribosyl)imidazole-4-carboxamide + L-glutamine = D-erythro-1-(imidazol-4-yl)glycerol 3-phosphate + 5-amino-1-(5-phospho-beta-D-ribosyl)imidazole-4-carboxamide + L-glutamate + H(+)</text>
        <dbReference type="Rhea" id="RHEA:24793"/>
        <dbReference type="ChEBI" id="CHEBI:15378"/>
        <dbReference type="ChEBI" id="CHEBI:29985"/>
        <dbReference type="ChEBI" id="CHEBI:58278"/>
        <dbReference type="ChEBI" id="CHEBI:58359"/>
        <dbReference type="ChEBI" id="CHEBI:58475"/>
        <dbReference type="ChEBI" id="CHEBI:58525"/>
        <dbReference type="EC" id="4.3.2.10"/>
    </reaction>
</comment>
<comment type="pathway">
    <text evidence="1">Amino-acid biosynthesis; L-histidine biosynthesis; L-histidine from 5-phospho-alpha-D-ribose 1-diphosphate: step 5/9.</text>
</comment>
<comment type="subunit">
    <text evidence="1">Heterodimer of HisH and HisF.</text>
</comment>
<comment type="subcellular location">
    <subcellularLocation>
        <location evidence="1">Cytoplasm</location>
    </subcellularLocation>
</comment>
<comment type="similarity">
    <text evidence="1">Belongs to the HisA/HisF family.</text>
</comment>
<organism>
    <name type="scientific">Streptococcus mutans serotype c (strain ATCC 700610 / UA159)</name>
    <dbReference type="NCBI Taxonomy" id="210007"/>
    <lineage>
        <taxon>Bacteria</taxon>
        <taxon>Bacillati</taxon>
        <taxon>Bacillota</taxon>
        <taxon>Bacilli</taxon>
        <taxon>Lactobacillales</taxon>
        <taxon>Streptococcaceae</taxon>
        <taxon>Streptococcus</taxon>
    </lineage>
</organism>
<keyword id="KW-0028">Amino-acid biosynthesis</keyword>
<keyword id="KW-0963">Cytoplasm</keyword>
<keyword id="KW-0368">Histidine biosynthesis</keyword>
<keyword id="KW-0456">Lyase</keyword>
<keyword id="KW-1185">Reference proteome</keyword>
<name>HIS6_STRMU</name>
<sequence length="251" mass="26874">MLKKRIIPCLDVKDGRVVKGVNFVNLTDVGDPVDAARAYYEAGCDELVFLDITATSDNRETTVDMVRHVADQVFIPFTVGGGIRSVDDMNKMLKAGADKVAVNSSAIANPQLIKDCAEKFGSQCVVVAIDARKEADDSWHVYVAGGRKDTGIDLLAWVKEAVQLGAGEILLTSMDKDGTKSGFDLDMLNAVAQLADIPIIASGGAGNMEHMVEIFEKTPATGALAASIFHYGEVSIADTKKAMKEHGIEVR</sequence>
<proteinExistence type="inferred from homology"/>
<reference key="1">
    <citation type="journal article" date="2002" name="Proc. Natl. Acad. Sci. U.S.A.">
        <title>Genome sequence of Streptococcus mutans UA159, a cariogenic dental pathogen.</title>
        <authorList>
            <person name="Ajdic D.J."/>
            <person name="McShan W.M."/>
            <person name="McLaughlin R.E."/>
            <person name="Savic G."/>
            <person name="Chang J."/>
            <person name="Carson M.B."/>
            <person name="Primeaux C."/>
            <person name="Tian R."/>
            <person name="Kenton S."/>
            <person name="Jia H.G."/>
            <person name="Lin S.P."/>
            <person name="Qian Y."/>
            <person name="Li S."/>
            <person name="Zhu H."/>
            <person name="Najar F.Z."/>
            <person name="Lai H."/>
            <person name="White J."/>
            <person name="Roe B.A."/>
            <person name="Ferretti J.J."/>
        </authorList>
    </citation>
    <scope>NUCLEOTIDE SEQUENCE [LARGE SCALE GENOMIC DNA]</scope>
    <source>
        <strain>ATCC 700610 / UA159</strain>
    </source>
</reference>
<protein>
    <recommendedName>
        <fullName evidence="1">Imidazole glycerol phosphate synthase subunit HisF</fullName>
        <ecNumber evidence="1">4.3.2.10</ecNumber>
    </recommendedName>
    <alternativeName>
        <fullName evidence="1">IGP synthase cyclase subunit</fullName>
    </alternativeName>
    <alternativeName>
        <fullName evidence="1">IGP synthase subunit HisF</fullName>
    </alternativeName>
    <alternativeName>
        <fullName evidence="1">ImGP synthase subunit HisF</fullName>
        <shortName evidence="1">IGPS subunit HisF</shortName>
    </alternativeName>
</protein>
<gene>
    <name evidence="1" type="primary">hisF</name>
    <name type="ordered locus">SMU_1264</name>
</gene>
<evidence type="ECO:0000255" key="1">
    <source>
        <dbReference type="HAMAP-Rule" id="MF_01013"/>
    </source>
</evidence>
<feature type="chain" id="PRO_0000142241" description="Imidazole glycerol phosphate synthase subunit HisF">
    <location>
        <begin position="1"/>
        <end position="251"/>
    </location>
</feature>
<feature type="active site" evidence="1">
    <location>
        <position position="11"/>
    </location>
</feature>
<feature type="active site" evidence="1">
    <location>
        <position position="130"/>
    </location>
</feature>
<accession>Q8DTR3</accession>
<dbReference type="EC" id="4.3.2.10" evidence="1"/>
<dbReference type="EMBL" id="AE014133">
    <property type="protein sequence ID" value="AAN58946.1"/>
    <property type="molecule type" value="Genomic_DNA"/>
</dbReference>
<dbReference type="RefSeq" id="NP_721640.1">
    <property type="nucleotide sequence ID" value="NC_004350.2"/>
</dbReference>
<dbReference type="RefSeq" id="WP_002263180.1">
    <property type="nucleotide sequence ID" value="NC_004350.2"/>
</dbReference>
<dbReference type="SMR" id="Q8DTR3"/>
<dbReference type="STRING" id="210007.SMU_1264"/>
<dbReference type="KEGG" id="smu:SMU_1264"/>
<dbReference type="PATRIC" id="fig|210007.7.peg.1133"/>
<dbReference type="eggNOG" id="COG0107">
    <property type="taxonomic scope" value="Bacteria"/>
</dbReference>
<dbReference type="HOGENOM" id="CLU_048577_4_0_9"/>
<dbReference type="OrthoDB" id="9781903at2"/>
<dbReference type="PhylomeDB" id="Q8DTR3"/>
<dbReference type="UniPathway" id="UPA00031">
    <property type="reaction ID" value="UER00010"/>
</dbReference>
<dbReference type="Proteomes" id="UP000002512">
    <property type="component" value="Chromosome"/>
</dbReference>
<dbReference type="GO" id="GO:0005737">
    <property type="term" value="C:cytoplasm"/>
    <property type="evidence" value="ECO:0007669"/>
    <property type="project" value="UniProtKB-SubCell"/>
</dbReference>
<dbReference type="GO" id="GO:0000107">
    <property type="term" value="F:imidazoleglycerol-phosphate synthase activity"/>
    <property type="evidence" value="ECO:0007669"/>
    <property type="project" value="UniProtKB-UniRule"/>
</dbReference>
<dbReference type="GO" id="GO:0016829">
    <property type="term" value="F:lyase activity"/>
    <property type="evidence" value="ECO:0007669"/>
    <property type="project" value="UniProtKB-KW"/>
</dbReference>
<dbReference type="GO" id="GO:0000105">
    <property type="term" value="P:L-histidine biosynthetic process"/>
    <property type="evidence" value="ECO:0007669"/>
    <property type="project" value="UniProtKB-UniRule"/>
</dbReference>
<dbReference type="CDD" id="cd04731">
    <property type="entry name" value="HisF"/>
    <property type="match status" value="1"/>
</dbReference>
<dbReference type="FunFam" id="3.20.20.70:FF:000006">
    <property type="entry name" value="Imidazole glycerol phosphate synthase subunit HisF"/>
    <property type="match status" value="1"/>
</dbReference>
<dbReference type="Gene3D" id="3.20.20.70">
    <property type="entry name" value="Aldolase class I"/>
    <property type="match status" value="1"/>
</dbReference>
<dbReference type="HAMAP" id="MF_01013">
    <property type="entry name" value="HisF"/>
    <property type="match status" value="1"/>
</dbReference>
<dbReference type="InterPro" id="IPR013785">
    <property type="entry name" value="Aldolase_TIM"/>
</dbReference>
<dbReference type="InterPro" id="IPR006062">
    <property type="entry name" value="His_biosynth"/>
</dbReference>
<dbReference type="InterPro" id="IPR004651">
    <property type="entry name" value="HisF"/>
</dbReference>
<dbReference type="InterPro" id="IPR050064">
    <property type="entry name" value="IGPS_HisA/HisF"/>
</dbReference>
<dbReference type="InterPro" id="IPR011060">
    <property type="entry name" value="RibuloseP-bd_barrel"/>
</dbReference>
<dbReference type="NCBIfam" id="TIGR00735">
    <property type="entry name" value="hisF"/>
    <property type="match status" value="1"/>
</dbReference>
<dbReference type="PANTHER" id="PTHR21235:SF2">
    <property type="entry name" value="IMIDAZOLE GLYCEROL PHOSPHATE SYNTHASE HISHF"/>
    <property type="match status" value="1"/>
</dbReference>
<dbReference type="PANTHER" id="PTHR21235">
    <property type="entry name" value="IMIDAZOLE GLYCEROL PHOSPHATE SYNTHASE SUBUNIT HISF/H IGP SYNTHASE SUBUNIT HISF/H"/>
    <property type="match status" value="1"/>
</dbReference>
<dbReference type="Pfam" id="PF00977">
    <property type="entry name" value="His_biosynth"/>
    <property type="match status" value="1"/>
</dbReference>
<dbReference type="SUPFAM" id="SSF51366">
    <property type="entry name" value="Ribulose-phoshate binding barrel"/>
    <property type="match status" value="1"/>
</dbReference>